<keyword id="KW-0067">ATP-binding</keyword>
<keyword id="KW-0173">Coenzyme A biosynthesis</keyword>
<keyword id="KW-0963">Cytoplasm</keyword>
<keyword id="KW-0418">Kinase</keyword>
<keyword id="KW-0547">Nucleotide-binding</keyword>
<keyword id="KW-1185">Reference proteome</keyword>
<keyword id="KW-0808">Transferase</keyword>
<comment type="function">
    <text evidence="1">Catalyzes the phosphorylation of the 3'-hydroxyl group of dephosphocoenzyme A to form coenzyme A.</text>
</comment>
<comment type="catalytic activity">
    <reaction evidence="1">
        <text>3'-dephospho-CoA + ATP = ADP + CoA + H(+)</text>
        <dbReference type="Rhea" id="RHEA:18245"/>
        <dbReference type="ChEBI" id="CHEBI:15378"/>
        <dbReference type="ChEBI" id="CHEBI:30616"/>
        <dbReference type="ChEBI" id="CHEBI:57287"/>
        <dbReference type="ChEBI" id="CHEBI:57328"/>
        <dbReference type="ChEBI" id="CHEBI:456216"/>
        <dbReference type="EC" id="2.7.1.24"/>
    </reaction>
</comment>
<comment type="pathway">
    <text evidence="1">Cofactor biosynthesis; coenzyme A biosynthesis; CoA from (R)-pantothenate: step 5/5.</text>
</comment>
<comment type="subcellular location">
    <subcellularLocation>
        <location evidence="1">Cytoplasm</location>
    </subcellularLocation>
</comment>
<comment type="similarity">
    <text evidence="1">Belongs to the CoaE family.</text>
</comment>
<dbReference type="EC" id="2.7.1.24" evidence="1"/>
<dbReference type="EMBL" id="CP000141">
    <property type="protein sequence ID" value="ABB14227.1"/>
    <property type="molecule type" value="Genomic_DNA"/>
</dbReference>
<dbReference type="RefSeq" id="WP_011344543.1">
    <property type="nucleotide sequence ID" value="NC_007503.1"/>
</dbReference>
<dbReference type="SMR" id="Q3ABL6"/>
<dbReference type="FunCoup" id="Q3ABL6">
    <property type="interactions" value="379"/>
</dbReference>
<dbReference type="STRING" id="246194.CHY_1647"/>
<dbReference type="KEGG" id="chy:CHY_1647"/>
<dbReference type="eggNOG" id="COG0237">
    <property type="taxonomic scope" value="Bacteria"/>
</dbReference>
<dbReference type="HOGENOM" id="CLU_057180_0_0_9"/>
<dbReference type="InParanoid" id="Q3ABL6"/>
<dbReference type="OrthoDB" id="9812943at2"/>
<dbReference type="UniPathway" id="UPA00241">
    <property type="reaction ID" value="UER00356"/>
</dbReference>
<dbReference type="Proteomes" id="UP000002706">
    <property type="component" value="Chromosome"/>
</dbReference>
<dbReference type="GO" id="GO:0005737">
    <property type="term" value="C:cytoplasm"/>
    <property type="evidence" value="ECO:0007669"/>
    <property type="project" value="UniProtKB-SubCell"/>
</dbReference>
<dbReference type="GO" id="GO:0005524">
    <property type="term" value="F:ATP binding"/>
    <property type="evidence" value="ECO:0007669"/>
    <property type="project" value="UniProtKB-UniRule"/>
</dbReference>
<dbReference type="GO" id="GO:0004140">
    <property type="term" value="F:dephospho-CoA kinase activity"/>
    <property type="evidence" value="ECO:0007669"/>
    <property type="project" value="UniProtKB-UniRule"/>
</dbReference>
<dbReference type="GO" id="GO:0015937">
    <property type="term" value="P:coenzyme A biosynthetic process"/>
    <property type="evidence" value="ECO:0007669"/>
    <property type="project" value="UniProtKB-UniRule"/>
</dbReference>
<dbReference type="CDD" id="cd02022">
    <property type="entry name" value="DPCK"/>
    <property type="match status" value="1"/>
</dbReference>
<dbReference type="FunFam" id="3.40.50.300:FF:000991">
    <property type="entry name" value="Dephospho-CoA kinase"/>
    <property type="match status" value="1"/>
</dbReference>
<dbReference type="Gene3D" id="3.40.50.300">
    <property type="entry name" value="P-loop containing nucleotide triphosphate hydrolases"/>
    <property type="match status" value="1"/>
</dbReference>
<dbReference type="HAMAP" id="MF_00376">
    <property type="entry name" value="Dephospho_CoA_kinase"/>
    <property type="match status" value="1"/>
</dbReference>
<dbReference type="InterPro" id="IPR001977">
    <property type="entry name" value="Depp_CoAkinase"/>
</dbReference>
<dbReference type="InterPro" id="IPR027417">
    <property type="entry name" value="P-loop_NTPase"/>
</dbReference>
<dbReference type="NCBIfam" id="TIGR00152">
    <property type="entry name" value="dephospho-CoA kinase"/>
    <property type="match status" value="1"/>
</dbReference>
<dbReference type="PANTHER" id="PTHR10695:SF46">
    <property type="entry name" value="BIFUNCTIONAL COENZYME A SYNTHASE-RELATED"/>
    <property type="match status" value="1"/>
</dbReference>
<dbReference type="PANTHER" id="PTHR10695">
    <property type="entry name" value="DEPHOSPHO-COA KINASE-RELATED"/>
    <property type="match status" value="1"/>
</dbReference>
<dbReference type="Pfam" id="PF01121">
    <property type="entry name" value="CoaE"/>
    <property type="match status" value="1"/>
</dbReference>
<dbReference type="SUPFAM" id="SSF52540">
    <property type="entry name" value="P-loop containing nucleoside triphosphate hydrolases"/>
    <property type="match status" value="1"/>
</dbReference>
<dbReference type="PROSITE" id="PS51219">
    <property type="entry name" value="DPCK"/>
    <property type="match status" value="1"/>
</dbReference>
<gene>
    <name evidence="1" type="primary">coaE</name>
    <name type="ordered locus">CHY_1647</name>
</gene>
<feature type="chain" id="PRO_0000243272" description="Dephospho-CoA kinase">
    <location>
        <begin position="1"/>
        <end position="206"/>
    </location>
</feature>
<feature type="domain" description="DPCK" evidence="1">
    <location>
        <begin position="6"/>
        <end position="206"/>
    </location>
</feature>
<feature type="binding site" evidence="1">
    <location>
        <begin position="14"/>
        <end position="19"/>
    </location>
    <ligand>
        <name>ATP</name>
        <dbReference type="ChEBI" id="CHEBI:30616"/>
    </ligand>
</feature>
<organism>
    <name type="scientific">Carboxydothermus hydrogenoformans (strain ATCC BAA-161 / DSM 6008 / Z-2901)</name>
    <dbReference type="NCBI Taxonomy" id="246194"/>
    <lineage>
        <taxon>Bacteria</taxon>
        <taxon>Bacillati</taxon>
        <taxon>Bacillota</taxon>
        <taxon>Clostridia</taxon>
        <taxon>Thermoanaerobacterales</taxon>
        <taxon>Thermoanaerobacteraceae</taxon>
        <taxon>Carboxydothermus</taxon>
    </lineage>
</organism>
<proteinExistence type="inferred from homology"/>
<protein>
    <recommendedName>
        <fullName evidence="1">Dephospho-CoA kinase</fullName>
        <ecNumber evidence="1">2.7.1.24</ecNumber>
    </recommendedName>
    <alternativeName>
        <fullName evidence="1">Dephosphocoenzyme A kinase</fullName>
    </alternativeName>
</protein>
<name>COAE_CARHZ</name>
<sequence length="206" mass="23299">MLVLPIIGLTGGIASGKSTVSRILQELGFAIIDADRIARDILTPGHPAYQKVIDTFGKNILTEDGQIDRAKLGKIVFGNREKLLVLNSITHPEVLKEIRKKIKELTSSGIDWIVLDIPLLFEAKMTSLVDEIWVVYVPEEEQLKRLMARNGFSRDEALARIRAQMPLEEKVKLADVVIDNSGSIESTREQILTILQKWKWKDWSKK</sequence>
<evidence type="ECO:0000255" key="1">
    <source>
        <dbReference type="HAMAP-Rule" id="MF_00376"/>
    </source>
</evidence>
<reference key="1">
    <citation type="journal article" date="2005" name="PLoS Genet.">
        <title>Life in hot carbon monoxide: the complete genome sequence of Carboxydothermus hydrogenoformans Z-2901.</title>
        <authorList>
            <person name="Wu M."/>
            <person name="Ren Q."/>
            <person name="Durkin A.S."/>
            <person name="Daugherty S.C."/>
            <person name="Brinkac L.M."/>
            <person name="Dodson R.J."/>
            <person name="Madupu R."/>
            <person name="Sullivan S.A."/>
            <person name="Kolonay J.F."/>
            <person name="Nelson W.C."/>
            <person name="Tallon L.J."/>
            <person name="Jones K.M."/>
            <person name="Ulrich L.E."/>
            <person name="Gonzalez J.M."/>
            <person name="Zhulin I.B."/>
            <person name="Robb F.T."/>
            <person name="Eisen J.A."/>
        </authorList>
    </citation>
    <scope>NUCLEOTIDE SEQUENCE [LARGE SCALE GENOMIC DNA]</scope>
    <source>
        <strain>ATCC BAA-161 / DSM 6008 / Z-2901</strain>
    </source>
</reference>
<accession>Q3ABL6</accession>